<gene>
    <name evidence="1" type="primary">mutH</name>
    <name type="ordered locus">YPN_2992</name>
    <name type="ORF">YP516_3388</name>
</gene>
<accession>Q1CFB1</accession>
<accession>C4GX18</accession>
<evidence type="ECO:0000255" key="1">
    <source>
        <dbReference type="HAMAP-Rule" id="MF_00759"/>
    </source>
</evidence>
<dbReference type="EMBL" id="CP000305">
    <property type="protein sequence ID" value="ABG19319.1"/>
    <property type="molecule type" value="Genomic_DNA"/>
</dbReference>
<dbReference type="EMBL" id="ACNQ01000017">
    <property type="protein sequence ID" value="EEO75468.1"/>
    <property type="molecule type" value="Genomic_DNA"/>
</dbReference>
<dbReference type="RefSeq" id="WP_002209838.1">
    <property type="nucleotide sequence ID" value="NZ_ACNQ01000017.1"/>
</dbReference>
<dbReference type="SMR" id="Q1CFB1"/>
<dbReference type="GeneID" id="57973847"/>
<dbReference type="KEGG" id="ypn:YPN_2992"/>
<dbReference type="HOGENOM" id="CLU_086669_0_0_6"/>
<dbReference type="Proteomes" id="UP000008936">
    <property type="component" value="Chromosome"/>
</dbReference>
<dbReference type="GO" id="GO:0005737">
    <property type="term" value="C:cytoplasm"/>
    <property type="evidence" value="ECO:0007669"/>
    <property type="project" value="UniProtKB-SubCell"/>
</dbReference>
<dbReference type="GO" id="GO:0003677">
    <property type="term" value="F:DNA binding"/>
    <property type="evidence" value="ECO:0007669"/>
    <property type="project" value="InterPro"/>
</dbReference>
<dbReference type="GO" id="GO:0004519">
    <property type="term" value="F:endonuclease activity"/>
    <property type="evidence" value="ECO:0007669"/>
    <property type="project" value="UniProtKB-UniRule"/>
</dbReference>
<dbReference type="GO" id="GO:0006304">
    <property type="term" value="P:DNA modification"/>
    <property type="evidence" value="ECO:0007669"/>
    <property type="project" value="InterPro"/>
</dbReference>
<dbReference type="GO" id="GO:0006298">
    <property type="term" value="P:mismatch repair"/>
    <property type="evidence" value="ECO:0007669"/>
    <property type="project" value="UniProtKB-UniRule"/>
</dbReference>
<dbReference type="CDD" id="cd00583">
    <property type="entry name" value="MutH-like"/>
    <property type="match status" value="1"/>
</dbReference>
<dbReference type="FunFam" id="3.40.600.10:FF:000001">
    <property type="entry name" value="DNA mismatch repair protein MutH"/>
    <property type="match status" value="1"/>
</dbReference>
<dbReference type="Gene3D" id="3.40.600.10">
    <property type="entry name" value="DNA mismatch repair MutH/Restriction endonuclease, type II"/>
    <property type="match status" value="1"/>
</dbReference>
<dbReference type="HAMAP" id="MF_00759">
    <property type="entry name" value="MutH"/>
    <property type="match status" value="1"/>
</dbReference>
<dbReference type="InterPro" id="IPR004230">
    <property type="entry name" value="DNA_mismatch_repair_MutH"/>
</dbReference>
<dbReference type="InterPro" id="IPR011337">
    <property type="entry name" value="DNA_rep_MutH/RE_typeII_Sau3AI"/>
</dbReference>
<dbReference type="InterPro" id="IPR037057">
    <property type="entry name" value="DNA_rep_MutH/T2_RE_sf"/>
</dbReference>
<dbReference type="InterPro" id="IPR011335">
    <property type="entry name" value="Restrct_endonuc-II-like"/>
</dbReference>
<dbReference type="NCBIfam" id="TIGR02248">
    <property type="entry name" value="mutH_TIGR"/>
    <property type="match status" value="1"/>
</dbReference>
<dbReference type="NCBIfam" id="NF003458">
    <property type="entry name" value="PRK05070.1"/>
    <property type="match status" value="1"/>
</dbReference>
<dbReference type="Pfam" id="PF02976">
    <property type="entry name" value="MutH"/>
    <property type="match status" value="1"/>
</dbReference>
<dbReference type="SMART" id="SM00927">
    <property type="entry name" value="MutH"/>
    <property type="match status" value="1"/>
</dbReference>
<dbReference type="SUPFAM" id="SSF52980">
    <property type="entry name" value="Restriction endonuclease-like"/>
    <property type="match status" value="1"/>
</dbReference>
<name>MUTH_YERPN</name>
<feature type="chain" id="PRO_1000046720" description="DNA mismatch repair protein MutH">
    <location>
        <begin position="1"/>
        <end position="228"/>
    </location>
</feature>
<protein>
    <recommendedName>
        <fullName evidence="1">DNA mismatch repair protein MutH</fullName>
    </recommendedName>
    <alternativeName>
        <fullName evidence="1">Methyl-directed mismatch repair protein</fullName>
    </alternativeName>
</protein>
<sequence length="228" mass="25332">MSVYSLPPAPPSDEHQLFQRAQALSGFTLGELATRAQWVIPADLKRVKGWVGMLLEFYLGASAGSKPEQDFADIGIELKTIPISAQGKPLETTFVCVAPLTGNSGVTWESSHVRHKLARVLWVPVEGERHIPLAERRVGAPLLWSPNVEEEELLRRDWEELMDLIVLGKVESITARHGQVLQLRPKAANSRALTEAIGEFGQPIMTLPRGFYLKKTLTAPMLARHFLL</sequence>
<keyword id="KW-0963">Cytoplasm</keyword>
<keyword id="KW-0227">DNA damage</keyword>
<keyword id="KW-0234">DNA repair</keyword>
<keyword id="KW-0255">Endonuclease</keyword>
<keyword id="KW-0378">Hydrolase</keyword>
<keyword id="KW-0540">Nuclease</keyword>
<reference key="1">
    <citation type="journal article" date="2006" name="J. Bacteriol.">
        <title>Complete genome sequence of Yersinia pestis strains Antiqua and Nepal516: evidence of gene reduction in an emerging pathogen.</title>
        <authorList>
            <person name="Chain P.S.G."/>
            <person name="Hu P."/>
            <person name="Malfatti S.A."/>
            <person name="Radnedge L."/>
            <person name="Larimer F."/>
            <person name="Vergez L.M."/>
            <person name="Worsham P."/>
            <person name="Chu M.C."/>
            <person name="Andersen G.L."/>
        </authorList>
    </citation>
    <scope>NUCLEOTIDE SEQUENCE [LARGE SCALE GENOMIC DNA]</scope>
    <source>
        <strain>Nepal516</strain>
    </source>
</reference>
<reference key="2">
    <citation type="submission" date="2009-04" db="EMBL/GenBank/DDBJ databases">
        <title>Yersinia pestis Nepal516A whole genome shotgun sequencing project.</title>
        <authorList>
            <person name="Plunkett G. III"/>
            <person name="Anderson B.D."/>
            <person name="Baumler D.J."/>
            <person name="Burland V."/>
            <person name="Cabot E.L."/>
            <person name="Glasner J.D."/>
            <person name="Mau B."/>
            <person name="Neeno-Eckwall E."/>
            <person name="Perna N.T."/>
            <person name="Munk A.C."/>
            <person name="Tapia R."/>
            <person name="Green L.D."/>
            <person name="Rogers Y.C."/>
            <person name="Detter J.C."/>
            <person name="Bruce D.C."/>
            <person name="Brettin T.S."/>
        </authorList>
    </citation>
    <scope>NUCLEOTIDE SEQUENCE [LARGE SCALE GENOMIC DNA]</scope>
    <source>
        <strain>Nepal516</strain>
    </source>
</reference>
<comment type="function">
    <text evidence="1">Sequence-specific endonuclease that cleaves unmethylated GATC sequences. It is involved in DNA mismatch repair.</text>
</comment>
<comment type="subcellular location">
    <subcellularLocation>
        <location evidence="1">Cytoplasm</location>
    </subcellularLocation>
</comment>
<comment type="similarity">
    <text evidence="1">Belongs to the MutH family.</text>
</comment>
<organism>
    <name type="scientific">Yersinia pestis bv. Antiqua (strain Nepal516)</name>
    <dbReference type="NCBI Taxonomy" id="377628"/>
    <lineage>
        <taxon>Bacteria</taxon>
        <taxon>Pseudomonadati</taxon>
        <taxon>Pseudomonadota</taxon>
        <taxon>Gammaproteobacteria</taxon>
        <taxon>Enterobacterales</taxon>
        <taxon>Yersiniaceae</taxon>
        <taxon>Yersinia</taxon>
    </lineage>
</organism>
<proteinExistence type="inferred from homology"/>